<gene>
    <name evidence="1" type="primary">rhmD</name>
    <name type="ordered locus">Z3505</name>
    <name type="ordered locus">ECs3135</name>
</gene>
<reference key="1">
    <citation type="journal article" date="2001" name="Nature">
        <title>Genome sequence of enterohaemorrhagic Escherichia coli O157:H7.</title>
        <authorList>
            <person name="Perna N.T."/>
            <person name="Plunkett G. III"/>
            <person name="Burland V."/>
            <person name="Mau B."/>
            <person name="Glasner J.D."/>
            <person name="Rose D.J."/>
            <person name="Mayhew G.F."/>
            <person name="Evans P.S."/>
            <person name="Gregor J."/>
            <person name="Kirkpatrick H.A."/>
            <person name="Posfai G."/>
            <person name="Hackett J."/>
            <person name="Klink S."/>
            <person name="Boutin A."/>
            <person name="Shao Y."/>
            <person name="Miller L."/>
            <person name="Grotbeck E.J."/>
            <person name="Davis N.W."/>
            <person name="Lim A."/>
            <person name="Dimalanta E.T."/>
            <person name="Potamousis K."/>
            <person name="Apodaca J."/>
            <person name="Anantharaman T.S."/>
            <person name="Lin J."/>
            <person name="Yen G."/>
            <person name="Schwartz D.C."/>
            <person name="Welch R.A."/>
            <person name="Blattner F.R."/>
        </authorList>
    </citation>
    <scope>NUCLEOTIDE SEQUENCE [LARGE SCALE GENOMIC DNA]</scope>
    <source>
        <strain>O157:H7 / EDL933 / ATCC 700927 / EHEC</strain>
    </source>
</reference>
<reference key="2">
    <citation type="journal article" date="2001" name="DNA Res.">
        <title>Complete genome sequence of enterohemorrhagic Escherichia coli O157:H7 and genomic comparison with a laboratory strain K-12.</title>
        <authorList>
            <person name="Hayashi T."/>
            <person name="Makino K."/>
            <person name="Ohnishi M."/>
            <person name="Kurokawa K."/>
            <person name="Ishii K."/>
            <person name="Yokoyama K."/>
            <person name="Han C.-G."/>
            <person name="Ohtsubo E."/>
            <person name="Nakayama K."/>
            <person name="Murata T."/>
            <person name="Tanaka M."/>
            <person name="Tobe T."/>
            <person name="Iida T."/>
            <person name="Takami H."/>
            <person name="Honda T."/>
            <person name="Sasakawa C."/>
            <person name="Ogasawara N."/>
            <person name="Yasunaga T."/>
            <person name="Kuhara S."/>
            <person name="Shiba T."/>
            <person name="Hattori M."/>
            <person name="Shinagawa H."/>
        </authorList>
    </citation>
    <scope>NUCLEOTIDE SEQUENCE [LARGE SCALE GENOMIC DNA]</scope>
    <source>
        <strain>O157:H7 / Sakai / RIMD 0509952 / EHEC</strain>
    </source>
</reference>
<proteinExistence type="inferred from homology"/>
<keyword id="KW-0456">Lyase</keyword>
<keyword id="KW-0460">Magnesium</keyword>
<keyword id="KW-0479">Metal-binding</keyword>
<keyword id="KW-1185">Reference proteome</keyword>
<comment type="function">
    <text evidence="1">Catalyzes the dehydration of L-rhamnonate to 2-keto-3-deoxy-L-rhamnonate (KDR).</text>
</comment>
<comment type="catalytic activity">
    <reaction evidence="1">
        <text>L-rhamnonate = 2-dehydro-3-deoxy-L-rhamnonate + H2O</text>
        <dbReference type="Rhea" id="RHEA:23080"/>
        <dbReference type="ChEBI" id="CHEBI:15377"/>
        <dbReference type="ChEBI" id="CHEBI:58118"/>
        <dbReference type="ChEBI" id="CHEBI:58371"/>
        <dbReference type="EC" id="4.2.1.90"/>
    </reaction>
</comment>
<comment type="cofactor">
    <cofactor evidence="1">
        <name>Mg(2+)</name>
        <dbReference type="ChEBI" id="CHEBI:18420"/>
    </cofactor>
    <text evidence="1">Binds 1 Mg(2+) ion per subunit.</text>
</comment>
<comment type="subunit">
    <text evidence="1">Homooctamer; tetramer of dimers.</text>
</comment>
<comment type="miscellaneous">
    <text evidence="1">Reaction proceeds via a syn dehydration.</text>
</comment>
<comment type="similarity">
    <text evidence="1">Belongs to the mandelate racemase/muconate lactonizing enzyme family. RhamD subfamily.</text>
</comment>
<comment type="sequence caution" evidence="2">
    <conflict type="erroneous initiation">
        <sequence resource="EMBL-CDS" id="AAG57378"/>
    </conflict>
    <text>Extended N-terminus.</text>
</comment>
<sequence length="401" mass="44250">MTLPKIKQVRAWFTGGATAEKGAGGGDYHDQGANHWIDDHIATPMSKYRDYEQLRQSFGINVLGTLVVEVEAENGQTGFAVSTAGEMGCFIVEKHLNRFIEGKCVSDIKLIHDQMLNATLYYSGSGGLVMNTISCVDLALWDLFGKVVGLPVYKLLGGAVRDEIQFYATGARPDLAKEMGFIGGKMPTHWGPHDGDAGIRKDAAMVADMREKCGEDFWLMLDCWMSQDVNYATKLAHACAPYNLKWIEECLPPQQYEGYRELKRNAPVGMMVTSGEHHGTLQSFRTLSETGIDIMQPDVGWCGGLTTLVEIAAIAKSRGQLVVPHGSSVYSHHAVITFTNTPFSEFLMTSPDCSTMRPQFDPILLNEPVPVNGRIHKSVLDKPGFGVELNRDCNLKRPYSH</sequence>
<protein>
    <recommendedName>
        <fullName evidence="1">L-rhamnonate dehydratase</fullName>
        <shortName evidence="1">RhamD</shortName>
        <ecNumber evidence="1">4.2.1.90</ecNumber>
    </recommendedName>
</protein>
<feature type="chain" id="PRO_0000351695" description="L-rhamnonate dehydratase">
    <location>
        <begin position="1"/>
        <end position="401"/>
    </location>
</feature>
<feature type="active site" description="Proton acceptor" evidence="1">
    <location>
        <position position="325"/>
    </location>
</feature>
<feature type="binding site" evidence="1">
    <location>
        <position position="29"/>
    </location>
    <ligand>
        <name>substrate</name>
    </ligand>
</feature>
<feature type="binding site" evidence="1">
    <location>
        <position position="55"/>
    </location>
    <ligand>
        <name>substrate</name>
    </ligand>
</feature>
<feature type="binding site" evidence="1">
    <location>
        <position position="222"/>
    </location>
    <ligand>
        <name>Mg(2+)</name>
        <dbReference type="ChEBI" id="CHEBI:18420"/>
    </ligand>
</feature>
<feature type="binding site" evidence="1">
    <location>
        <position position="248"/>
    </location>
    <ligand>
        <name>Mg(2+)</name>
        <dbReference type="ChEBI" id="CHEBI:18420"/>
    </ligand>
</feature>
<feature type="binding site" evidence="1">
    <location>
        <position position="276"/>
    </location>
    <ligand>
        <name>Mg(2+)</name>
        <dbReference type="ChEBI" id="CHEBI:18420"/>
    </ligand>
</feature>
<feature type="binding site" evidence="1">
    <location>
        <position position="345"/>
    </location>
    <ligand>
        <name>substrate</name>
    </ligand>
</feature>
<feature type="site" description="Increases basicity of active site His" evidence="1">
    <location>
        <position position="298"/>
    </location>
</feature>
<feature type="site" description="Transition state stabilizer" evidence="1">
    <location>
        <position position="345"/>
    </location>
</feature>
<accession>Q8XE07</accession>
<accession>Q7AC30</accession>
<evidence type="ECO:0000255" key="1">
    <source>
        <dbReference type="HAMAP-Rule" id="MF_01288"/>
    </source>
</evidence>
<evidence type="ECO:0000305" key="2"/>
<name>RHMD_ECO57</name>
<organism>
    <name type="scientific">Escherichia coli O157:H7</name>
    <dbReference type="NCBI Taxonomy" id="83334"/>
    <lineage>
        <taxon>Bacteria</taxon>
        <taxon>Pseudomonadati</taxon>
        <taxon>Pseudomonadota</taxon>
        <taxon>Gammaproteobacteria</taxon>
        <taxon>Enterobacterales</taxon>
        <taxon>Enterobacteriaceae</taxon>
        <taxon>Escherichia</taxon>
    </lineage>
</organism>
<dbReference type="EC" id="4.2.1.90" evidence="1"/>
<dbReference type="EMBL" id="AE005174">
    <property type="protein sequence ID" value="AAG57378.1"/>
    <property type="status" value="ALT_INIT"/>
    <property type="molecule type" value="Genomic_DNA"/>
</dbReference>
<dbReference type="EMBL" id="BA000007">
    <property type="protein sequence ID" value="BAB36558.2"/>
    <property type="molecule type" value="Genomic_DNA"/>
</dbReference>
<dbReference type="PIR" id="F85864">
    <property type="entry name" value="F85864"/>
</dbReference>
<dbReference type="PIR" id="G91020">
    <property type="entry name" value="G91020"/>
</dbReference>
<dbReference type="RefSeq" id="NP_311162.1">
    <property type="nucleotide sequence ID" value="NC_002695.1"/>
</dbReference>
<dbReference type="RefSeq" id="WP_000174589.1">
    <property type="nucleotide sequence ID" value="NZ_VOAI01000001.1"/>
</dbReference>
<dbReference type="SMR" id="Q8XE07"/>
<dbReference type="STRING" id="155864.Z3505"/>
<dbReference type="GeneID" id="916843"/>
<dbReference type="KEGG" id="ece:Z3505"/>
<dbReference type="KEGG" id="ecs:ECs_3135"/>
<dbReference type="PATRIC" id="fig|386585.9.peg.3270"/>
<dbReference type="eggNOG" id="COG4948">
    <property type="taxonomic scope" value="Bacteria"/>
</dbReference>
<dbReference type="HOGENOM" id="CLU_030273_1_0_6"/>
<dbReference type="OMA" id="WGYAELR"/>
<dbReference type="Proteomes" id="UP000000558">
    <property type="component" value="Chromosome"/>
</dbReference>
<dbReference type="Proteomes" id="UP000002519">
    <property type="component" value="Chromosome"/>
</dbReference>
<dbReference type="GO" id="GO:0050032">
    <property type="term" value="F:L-rhamnonate dehydratase activity"/>
    <property type="evidence" value="ECO:0007669"/>
    <property type="project" value="UniProtKB-UniRule"/>
</dbReference>
<dbReference type="GO" id="GO:0000287">
    <property type="term" value="F:magnesium ion binding"/>
    <property type="evidence" value="ECO:0007669"/>
    <property type="project" value="UniProtKB-UniRule"/>
</dbReference>
<dbReference type="GO" id="GO:0009063">
    <property type="term" value="P:amino acid catabolic process"/>
    <property type="evidence" value="ECO:0007669"/>
    <property type="project" value="InterPro"/>
</dbReference>
<dbReference type="GO" id="GO:0016052">
    <property type="term" value="P:carbohydrate catabolic process"/>
    <property type="evidence" value="ECO:0007669"/>
    <property type="project" value="TreeGrafter"/>
</dbReference>
<dbReference type="CDD" id="cd03327">
    <property type="entry name" value="MR_like_2"/>
    <property type="match status" value="1"/>
</dbReference>
<dbReference type="FunFam" id="3.30.390.10:FF:000007">
    <property type="entry name" value="L-rhamnonate dehydratase"/>
    <property type="match status" value="1"/>
</dbReference>
<dbReference type="FunFam" id="3.20.20.120:FF:000005">
    <property type="entry name" value="Putative L-rhamnonate dehydratase"/>
    <property type="match status" value="1"/>
</dbReference>
<dbReference type="Gene3D" id="3.20.20.120">
    <property type="entry name" value="Enolase-like C-terminal domain"/>
    <property type="match status" value="1"/>
</dbReference>
<dbReference type="Gene3D" id="3.30.390.10">
    <property type="entry name" value="Enolase-like, N-terminal domain"/>
    <property type="match status" value="1"/>
</dbReference>
<dbReference type="HAMAP" id="MF_01288">
    <property type="entry name" value="Rhamnon_dehydrat"/>
    <property type="match status" value="1"/>
</dbReference>
<dbReference type="InterPro" id="IPR036849">
    <property type="entry name" value="Enolase-like_C_sf"/>
</dbReference>
<dbReference type="InterPro" id="IPR029017">
    <property type="entry name" value="Enolase-like_N"/>
</dbReference>
<dbReference type="InterPro" id="IPR029065">
    <property type="entry name" value="Enolase_C-like"/>
</dbReference>
<dbReference type="InterPro" id="IPR023444">
    <property type="entry name" value="L-Rhamnon_dehydrat"/>
</dbReference>
<dbReference type="InterPro" id="IPR018110">
    <property type="entry name" value="Mandel_Rmase/mucon_lact_enz_CS"/>
</dbReference>
<dbReference type="InterPro" id="IPR013342">
    <property type="entry name" value="Mandelate_racemase_C"/>
</dbReference>
<dbReference type="InterPro" id="IPR013341">
    <property type="entry name" value="Mandelate_racemase_N_dom"/>
</dbReference>
<dbReference type="InterPro" id="IPR046945">
    <property type="entry name" value="RHMD-like"/>
</dbReference>
<dbReference type="NCBIfam" id="NF011968">
    <property type="entry name" value="PRK15440.1"/>
    <property type="match status" value="1"/>
</dbReference>
<dbReference type="PANTHER" id="PTHR13794">
    <property type="entry name" value="ENOLASE SUPERFAMILY, MANDELATE RACEMASE"/>
    <property type="match status" value="1"/>
</dbReference>
<dbReference type="PANTHER" id="PTHR13794:SF58">
    <property type="entry name" value="MITOCHONDRIAL ENOLASE SUPERFAMILY MEMBER 1"/>
    <property type="match status" value="1"/>
</dbReference>
<dbReference type="Pfam" id="PF13378">
    <property type="entry name" value="MR_MLE_C"/>
    <property type="match status" value="1"/>
</dbReference>
<dbReference type="Pfam" id="PF02746">
    <property type="entry name" value="MR_MLE_N"/>
    <property type="match status" value="1"/>
</dbReference>
<dbReference type="SFLD" id="SFLDS00001">
    <property type="entry name" value="Enolase"/>
    <property type="match status" value="1"/>
</dbReference>
<dbReference type="SFLD" id="SFLDF00006">
    <property type="entry name" value="rhamnonate_dehydratase"/>
    <property type="match status" value="1"/>
</dbReference>
<dbReference type="SMART" id="SM00922">
    <property type="entry name" value="MR_MLE"/>
    <property type="match status" value="1"/>
</dbReference>
<dbReference type="SUPFAM" id="SSF51604">
    <property type="entry name" value="Enolase C-terminal domain-like"/>
    <property type="match status" value="1"/>
</dbReference>
<dbReference type="SUPFAM" id="SSF54826">
    <property type="entry name" value="Enolase N-terminal domain-like"/>
    <property type="match status" value="1"/>
</dbReference>
<dbReference type="PROSITE" id="PS00908">
    <property type="entry name" value="MR_MLE_1"/>
    <property type="match status" value="1"/>
</dbReference>